<protein>
    <recommendedName>
        <fullName evidence="1">Elongation factor G</fullName>
        <shortName evidence="1">EF-G</shortName>
    </recommendedName>
</protein>
<dbReference type="EMBL" id="CP001364">
    <property type="protein sequence ID" value="ACM53944.1"/>
    <property type="molecule type" value="Genomic_DNA"/>
</dbReference>
<dbReference type="SMR" id="B9LJC8"/>
<dbReference type="KEGG" id="chl:Chy400_2552"/>
<dbReference type="HOGENOM" id="CLU_002794_4_1_0"/>
<dbReference type="OrthoDB" id="9804431at2"/>
<dbReference type="GO" id="GO:0005737">
    <property type="term" value="C:cytoplasm"/>
    <property type="evidence" value="ECO:0007669"/>
    <property type="project" value="UniProtKB-SubCell"/>
</dbReference>
<dbReference type="GO" id="GO:0005525">
    <property type="term" value="F:GTP binding"/>
    <property type="evidence" value="ECO:0007669"/>
    <property type="project" value="UniProtKB-UniRule"/>
</dbReference>
<dbReference type="GO" id="GO:0003924">
    <property type="term" value="F:GTPase activity"/>
    <property type="evidence" value="ECO:0007669"/>
    <property type="project" value="InterPro"/>
</dbReference>
<dbReference type="GO" id="GO:0003746">
    <property type="term" value="F:translation elongation factor activity"/>
    <property type="evidence" value="ECO:0007669"/>
    <property type="project" value="UniProtKB-UniRule"/>
</dbReference>
<dbReference type="GO" id="GO:0032790">
    <property type="term" value="P:ribosome disassembly"/>
    <property type="evidence" value="ECO:0007669"/>
    <property type="project" value="TreeGrafter"/>
</dbReference>
<dbReference type="CDD" id="cd01886">
    <property type="entry name" value="EF-G"/>
    <property type="match status" value="1"/>
</dbReference>
<dbReference type="CDD" id="cd16262">
    <property type="entry name" value="EFG_III"/>
    <property type="match status" value="1"/>
</dbReference>
<dbReference type="CDD" id="cd01434">
    <property type="entry name" value="EFG_mtEFG1_IV"/>
    <property type="match status" value="1"/>
</dbReference>
<dbReference type="CDD" id="cd03713">
    <property type="entry name" value="EFG_mtEFG_C"/>
    <property type="match status" value="1"/>
</dbReference>
<dbReference type="CDD" id="cd04088">
    <property type="entry name" value="EFG_mtEFG_II"/>
    <property type="match status" value="1"/>
</dbReference>
<dbReference type="FunFam" id="2.40.30.10:FF:000006">
    <property type="entry name" value="Elongation factor G"/>
    <property type="match status" value="1"/>
</dbReference>
<dbReference type="FunFam" id="3.30.230.10:FF:000003">
    <property type="entry name" value="Elongation factor G"/>
    <property type="match status" value="1"/>
</dbReference>
<dbReference type="FunFam" id="3.30.70.240:FF:000001">
    <property type="entry name" value="Elongation factor G"/>
    <property type="match status" value="1"/>
</dbReference>
<dbReference type="FunFam" id="3.30.70.870:FF:000001">
    <property type="entry name" value="Elongation factor G"/>
    <property type="match status" value="1"/>
</dbReference>
<dbReference type="FunFam" id="3.40.50.300:FF:000029">
    <property type="entry name" value="Elongation factor G"/>
    <property type="match status" value="1"/>
</dbReference>
<dbReference type="Gene3D" id="3.30.230.10">
    <property type="match status" value="1"/>
</dbReference>
<dbReference type="Gene3D" id="3.30.70.240">
    <property type="match status" value="1"/>
</dbReference>
<dbReference type="Gene3D" id="3.30.70.870">
    <property type="entry name" value="Elongation Factor G (Translational Gtpase), domain 3"/>
    <property type="match status" value="1"/>
</dbReference>
<dbReference type="Gene3D" id="3.40.50.300">
    <property type="entry name" value="P-loop containing nucleotide triphosphate hydrolases"/>
    <property type="match status" value="1"/>
</dbReference>
<dbReference type="Gene3D" id="2.40.30.10">
    <property type="entry name" value="Translation factors"/>
    <property type="match status" value="1"/>
</dbReference>
<dbReference type="HAMAP" id="MF_00054_B">
    <property type="entry name" value="EF_G_EF_2_B"/>
    <property type="match status" value="1"/>
</dbReference>
<dbReference type="InterPro" id="IPR053905">
    <property type="entry name" value="EF-G-like_DII"/>
</dbReference>
<dbReference type="InterPro" id="IPR041095">
    <property type="entry name" value="EFG_II"/>
</dbReference>
<dbReference type="InterPro" id="IPR009022">
    <property type="entry name" value="EFG_III"/>
</dbReference>
<dbReference type="InterPro" id="IPR035647">
    <property type="entry name" value="EFG_III/V"/>
</dbReference>
<dbReference type="InterPro" id="IPR047872">
    <property type="entry name" value="EFG_IV"/>
</dbReference>
<dbReference type="InterPro" id="IPR035649">
    <property type="entry name" value="EFG_V"/>
</dbReference>
<dbReference type="InterPro" id="IPR000640">
    <property type="entry name" value="EFG_V-like"/>
</dbReference>
<dbReference type="InterPro" id="IPR031157">
    <property type="entry name" value="G_TR_CS"/>
</dbReference>
<dbReference type="InterPro" id="IPR027417">
    <property type="entry name" value="P-loop_NTPase"/>
</dbReference>
<dbReference type="InterPro" id="IPR020568">
    <property type="entry name" value="Ribosomal_Su5_D2-typ_SF"/>
</dbReference>
<dbReference type="InterPro" id="IPR014721">
    <property type="entry name" value="Ribsml_uS5_D2-typ_fold_subgr"/>
</dbReference>
<dbReference type="InterPro" id="IPR005225">
    <property type="entry name" value="Small_GTP-bd"/>
</dbReference>
<dbReference type="InterPro" id="IPR000795">
    <property type="entry name" value="T_Tr_GTP-bd_dom"/>
</dbReference>
<dbReference type="InterPro" id="IPR009000">
    <property type="entry name" value="Transl_B-barrel_sf"/>
</dbReference>
<dbReference type="InterPro" id="IPR004540">
    <property type="entry name" value="Transl_elong_EFG/EF2"/>
</dbReference>
<dbReference type="InterPro" id="IPR005517">
    <property type="entry name" value="Transl_elong_EFG/EF2_IV"/>
</dbReference>
<dbReference type="NCBIfam" id="TIGR00484">
    <property type="entry name" value="EF-G"/>
    <property type="match status" value="1"/>
</dbReference>
<dbReference type="NCBIfam" id="NF009379">
    <property type="entry name" value="PRK12740.1-3"/>
    <property type="match status" value="1"/>
</dbReference>
<dbReference type="NCBIfam" id="NF009381">
    <property type="entry name" value="PRK12740.1-5"/>
    <property type="match status" value="1"/>
</dbReference>
<dbReference type="NCBIfam" id="TIGR00231">
    <property type="entry name" value="small_GTP"/>
    <property type="match status" value="1"/>
</dbReference>
<dbReference type="PANTHER" id="PTHR43261:SF1">
    <property type="entry name" value="RIBOSOME-RELEASING FACTOR 2, MITOCHONDRIAL"/>
    <property type="match status" value="1"/>
</dbReference>
<dbReference type="PANTHER" id="PTHR43261">
    <property type="entry name" value="TRANSLATION ELONGATION FACTOR G-RELATED"/>
    <property type="match status" value="1"/>
</dbReference>
<dbReference type="Pfam" id="PF22042">
    <property type="entry name" value="EF-G_D2"/>
    <property type="match status" value="1"/>
</dbReference>
<dbReference type="Pfam" id="PF00679">
    <property type="entry name" value="EFG_C"/>
    <property type="match status" value="1"/>
</dbReference>
<dbReference type="Pfam" id="PF14492">
    <property type="entry name" value="EFG_III"/>
    <property type="match status" value="1"/>
</dbReference>
<dbReference type="Pfam" id="PF03764">
    <property type="entry name" value="EFG_IV"/>
    <property type="match status" value="1"/>
</dbReference>
<dbReference type="Pfam" id="PF00009">
    <property type="entry name" value="GTP_EFTU"/>
    <property type="match status" value="1"/>
</dbReference>
<dbReference type="PRINTS" id="PR00315">
    <property type="entry name" value="ELONGATNFCT"/>
</dbReference>
<dbReference type="SMART" id="SM00838">
    <property type="entry name" value="EFG_C"/>
    <property type="match status" value="1"/>
</dbReference>
<dbReference type="SMART" id="SM00889">
    <property type="entry name" value="EFG_IV"/>
    <property type="match status" value="1"/>
</dbReference>
<dbReference type="SUPFAM" id="SSF54980">
    <property type="entry name" value="EF-G C-terminal domain-like"/>
    <property type="match status" value="2"/>
</dbReference>
<dbReference type="SUPFAM" id="SSF52540">
    <property type="entry name" value="P-loop containing nucleoside triphosphate hydrolases"/>
    <property type="match status" value="1"/>
</dbReference>
<dbReference type="SUPFAM" id="SSF54211">
    <property type="entry name" value="Ribosomal protein S5 domain 2-like"/>
    <property type="match status" value="1"/>
</dbReference>
<dbReference type="SUPFAM" id="SSF50447">
    <property type="entry name" value="Translation proteins"/>
    <property type="match status" value="1"/>
</dbReference>
<dbReference type="PROSITE" id="PS00301">
    <property type="entry name" value="G_TR_1"/>
    <property type="match status" value="1"/>
</dbReference>
<dbReference type="PROSITE" id="PS51722">
    <property type="entry name" value="G_TR_2"/>
    <property type="match status" value="1"/>
</dbReference>
<keyword id="KW-0963">Cytoplasm</keyword>
<keyword id="KW-0251">Elongation factor</keyword>
<keyword id="KW-0342">GTP-binding</keyword>
<keyword id="KW-0547">Nucleotide-binding</keyword>
<keyword id="KW-0648">Protein biosynthesis</keyword>
<evidence type="ECO:0000255" key="1">
    <source>
        <dbReference type="HAMAP-Rule" id="MF_00054"/>
    </source>
</evidence>
<sequence>MPRQIELDKVRNIGIIAHIDAGKTTTTERILFYTGRTYKIGEVHEGTATMDWMPQEQERGITITAAATTAPWRLDGVEYRINIIDTPGHVDFTVEVERSLRVLDGGVVVFDGVAGVEPQSETVWRQADKYNVPRICFVNKMDRVGASFERCVQMIKDRLGAKPAIVQLPIGVEDSFRGTIDLFKMKATVYYDDLGKDIREEEIPAELRPAAEQARNELIEMIAETDDELTLLYLEGQELTVEELKRGLRKATIERKLVPVLCGAALRNKGVQKLLDAVVEYLPSPLDRPAITGTLPGQVMGDEGVEVITRPVSDDAPFTALVFKIVADPYVGKLAYFRVYAGKITKGSYVLNSTRNQRERLGRILRMHANHREDIEEVYAGEIAAMVGPKNSYTGDTICDPDHPIVLESIRFPEPVIELAVEPKTKADQDKMSIALSRLAEEDPTFRVYTDPETGQTIIKGMGELHLEVILDRMRREYKVEANQGKPQVSYRETITIPVDQETRFVRQTGGKGQYGHVKIKFEPLPPGSGFEFVNAIVGGVIPKEYIPAVEQGLREAMQTGVIAGYPVVDVKATLYDGSYHEVDSSEMAFKIAASMCLKDAVRRGKPQLLEPIMKVETVTPEEFLGTVIGDFNSRRGRIEGMEARGNAQVVRAFVPLANMFGYMTDLRSATQGRATSSMEFDHYEPLPEALAKEIIEKRSAN</sequence>
<gene>
    <name evidence="1" type="primary">fusA</name>
    <name type="ordered locus">Chy400_2552</name>
</gene>
<feature type="chain" id="PRO_1000201448" description="Elongation factor G">
    <location>
        <begin position="1"/>
        <end position="702"/>
    </location>
</feature>
<feature type="domain" description="tr-type G">
    <location>
        <begin position="8"/>
        <end position="286"/>
    </location>
</feature>
<feature type="binding site" evidence="1">
    <location>
        <begin position="17"/>
        <end position="24"/>
    </location>
    <ligand>
        <name>GTP</name>
        <dbReference type="ChEBI" id="CHEBI:37565"/>
    </ligand>
</feature>
<feature type="binding site" evidence="1">
    <location>
        <begin position="85"/>
        <end position="89"/>
    </location>
    <ligand>
        <name>GTP</name>
        <dbReference type="ChEBI" id="CHEBI:37565"/>
    </ligand>
</feature>
<feature type="binding site" evidence="1">
    <location>
        <begin position="139"/>
        <end position="142"/>
    </location>
    <ligand>
        <name>GTP</name>
        <dbReference type="ChEBI" id="CHEBI:37565"/>
    </ligand>
</feature>
<proteinExistence type="inferred from homology"/>
<name>EFG_CHLSY</name>
<organism>
    <name type="scientific">Chloroflexus aurantiacus (strain ATCC 29364 / DSM 637 / Y-400-fl)</name>
    <dbReference type="NCBI Taxonomy" id="480224"/>
    <lineage>
        <taxon>Bacteria</taxon>
        <taxon>Bacillati</taxon>
        <taxon>Chloroflexota</taxon>
        <taxon>Chloroflexia</taxon>
        <taxon>Chloroflexales</taxon>
        <taxon>Chloroflexineae</taxon>
        <taxon>Chloroflexaceae</taxon>
        <taxon>Chloroflexus</taxon>
    </lineage>
</organism>
<reference key="1">
    <citation type="submission" date="2009-01" db="EMBL/GenBank/DDBJ databases">
        <title>Complete sequence of Chloroflexus sp. Y-400-fl.</title>
        <authorList>
            <consortium name="US DOE Joint Genome Institute"/>
            <person name="Lucas S."/>
            <person name="Copeland A."/>
            <person name="Lapidus A."/>
            <person name="Glavina del Rio T."/>
            <person name="Dalin E."/>
            <person name="Tice H."/>
            <person name="Bruce D."/>
            <person name="Goodwin L."/>
            <person name="Pitluck S."/>
            <person name="Sims D."/>
            <person name="Kiss H."/>
            <person name="Brettin T."/>
            <person name="Detter J.C."/>
            <person name="Han C."/>
            <person name="Larimer F."/>
            <person name="Land M."/>
            <person name="Hauser L."/>
            <person name="Kyrpides N."/>
            <person name="Ovchinnikova G."/>
            <person name="Bryant D.A."/>
            <person name="Richardson P."/>
        </authorList>
    </citation>
    <scope>NUCLEOTIDE SEQUENCE [LARGE SCALE GENOMIC DNA]</scope>
    <source>
        <strain>ATCC 29364 / DSM 637 / Y-400-fl</strain>
    </source>
</reference>
<comment type="function">
    <text evidence="1">Catalyzes the GTP-dependent ribosomal translocation step during translation elongation. During this step, the ribosome changes from the pre-translocational (PRE) to the post-translocational (POST) state as the newly formed A-site-bound peptidyl-tRNA and P-site-bound deacylated tRNA move to the P and E sites, respectively. Catalyzes the coordinated movement of the two tRNA molecules, the mRNA and conformational changes in the ribosome.</text>
</comment>
<comment type="subcellular location">
    <subcellularLocation>
        <location evidence="1">Cytoplasm</location>
    </subcellularLocation>
</comment>
<comment type="similarity">
    <text evidence="1">Belongs to the TRAFAC class translation factor GTPase superfamily. Classic translation factor GTPase family. EF-G/EF-2 subfamily.</text>
</comment>
<accession>B9LJC8</accession>